<reference key="1">
    <citation type="journal article" date="1987" name="EMBO J.">
        <title>Human ribophorins I and II: the primary structure and membrane topology of two highly conserved rough endoplasmic reticulum-specific glycoproteins.</title>
        <authorList>
            <person name="Crimaudo C."/>
            <person name="Hortsch M."/>
            <person name="Gausepohl H."/>
            <person name="Meyer D.I."/>
        </authorList>
    </citation>
    <scope>NUCLEOTIDE SEQUENCE [MRNA] (ISOFORM 1)</scope>
</reference>
<reference key="2">
    <citation type="submission" date="1999-09" db="EMBL/GenBank/DDBJ databases">
        <title>Genomic structure of human ribophorin II gene.</title>
        <authorList>
            <person name="Iolascon A."/>
            <person name="Totaro A."/>
            <person name="Gasparini P."/>
        </authorList>
    </citation>
    <scope>NUCLEOTIDE SEQUENCE [GENOMIC DNA]</scope>
</reference>
<reference key="3">
    <citation type="journal article" date="2004" name="Nat. Genet.">
        <title>Complete sequencing and characterization of 21,243 full-length human cDNAs.</title>
        <authorList>
            <person name="Ota T."/>
            <person name="Suzuki Y."/>
            <person name="Nishikawa T."/>
            <person name="Otsuki T."/>
            <person name="Sugiyama T."/>
            <person name="Irie R."/>
            <person name="Wakamatsu A."/>
            <person name="Hayashi K."/>
            <person name="Sato H."/>
            <person name="Nagai K."/>
            <person name="Kimura K."/>
            <person name="Makita H."/>
            <person name="Sekine M."/>
            <person name="Obayashi M."/>
            <person name="Nishi T."/>
            <person name="Shibahara T."/>
            <person name="Tanaka T."/>
            <person name="Ishii S."/>
            <person name="Yamamoto J."/>
            <person name="Saito K."/>
            <person name="Kawai Y."/>
            <person name="Isono Y."/>
            <person name="Nakamura Y."/>
            <person name="Nagahari K."/>
            <person name="Murakami K."/>
            <person name="Yasuda T."/>
            <person name="Iwayanagi T."/>
            <person name="Wagatsuma M."/>
            <person name="Shiratori A."/>
            <person name="Sudo H."/>
            <person name="Hosoiri T."/>
            <person name="Kaku Y."/>
            <person name="Kodaira H."/>
            <person name="Kondo H."/>
            <person name="Sugawara M."/>
            <person name="Takahashi M."/>
            <person name="Kanda K."/>
            <person name="Yokoi T."/>
            <person name="Furuya T."/>
            <person name="Kikkawa E."/>
            <person name="Omura Y."/>
            <person name="Abe K."/>
            <person name="Kamihara K."/>
            <person name="Katsuta N."/>
            <person name="Sato K."/>
            <person name="Tanikawa M."/>
            <person name="Yamazaki M."/>
            <person name="Ninomiya K."/>
            <person name="Ishibashi T."/>
            <person name="Yamashita H."/>
            <person name="Murakawa K."/>
            <person name="Fujimori K."/>
            <person name="Tanai H."/>
            <person name="Kimata M."/>
            <person name="Watanabe M."/>
            <person name="Hiraoka S."/>
            <person name="Chiba Y."/>
            <person name="Ishida S."/>
            <person name="Ono Y."/>
            <person name="Takiguchi S."/>
            <person name="Watanabe S."/>
            <person name="Yosida M."/>
            <person name="Hotuta T."/>
            <person name="Kusano J."/>
            <person name="Kanehori K."/>
            <person name="Takahashi-Fujii A."/>
            <person name="Hara H."/>
            <person name="Tanase T.-O."/>
            <person name="Nomura Y."/>
            <person name="Togiya S."/>
            <person name="Komai F."/>
            <person name="Hara R."/>
            <person name="Takeuchi K."/>
            <person name="Arita M."/>
            <person name="Imose N."/>
            <person name="Musashino K."/>
            <person name="Yuuki H."/>
            <person name="Oshima A."/>
            <person name="Sasaki N."/>
            <person name="Aotsuka S."/>
            <person name="Yoshikawa Y."/>
            <person name="Matsunawa H."/>
            <person name="Ichihara T."/>
            <person name="Shiohata N."/>
            <person name="Sano S."/>
            <person name="Moriya S."/>
            <person name="Momiyama H."/>
            <person name="Satoh N."/>
            <person name="Takami S."/>
            <person name="Terashima Y."/>
            <person name="Suzuki O."/>
            <person name="Nakagawa S."/>
            <person name="Senoh A."/>
            <person name="Mizoguchi H."/>
            <person name="Goto Y."/>
            <person name="Shimizu F."/>
            <person name="Wakebe H."/>
            <person name="Hishigaki H."/>
            <person name="Watanabe T."/>
            <person name="Sugiyama A."/>
            <person name="Takemoto M."/>
            <person name="Kawakami B."/>
            <person name="Yamazaki M."/>
            <person name="Watanabe K."/>
            <person name="Kumagai A."/>
            <person name="Itakura S."/>
            <person name="Fukuzumi Y."/>
            <person name="Fujimori Y."/>
            <person name="Komiyama M."/>
            <person name="Tashiro H."/>
            <person name="Tanigami A."/>
            <person name="Fujiwara T."/>
            <person name="Ono T."/>
            <person name="Yamada K."/>
            <person name="Fujii Y."/>
            <person name="Ozaki K."/>
            <person name="Hirao M."/>
            <person name="Ohmori Y."/>
            <person name="Kawabata A."/>
            <person name="Hikiji T."/>
            <person name="Kobatake N."/>
            <person name="Inagaki H."/>
            <person name="Ikema Y."/>
            <person name="Okamoto S."/>
            <person name="Okitani R."/>
            <person name="Kawakami T."/>
            <person name="Noguchi S."/>
            <person name="Itoh T."/>
            <person name="Shigeta K."/>
            <person name="Senba T."/>
            <person name="Matsumura K."/>
            <person name="Nakajima Y."/>
            <person name="Mizuno T."/>
            <person name="Morinaga M."/>
            <person name="Sasaki M."/>
            <person name="Togashi T."/>
            <person name="Oyama M."/>
            <person name="Hata H."/>
            <person name="Watanabe M."/>
            <person name="Komatsu T."/>
            <person name="Mizushima-Sugano J."/>
            <person name="Satoh T."/>
            <person name="Shirai Y."/>
            <person name="Takahashi Y."/>
            <person name="Nakagawa K."/>
            <person name="Okumura K."/>
            <person name="Nagase T."/>
            <person name="Nomura N."/>
            <person name="Kikuchi H."/>
            <person name="Masuho Y."/>
            <person name="Yamashita R."/>
            <person name="Nakai K."/>
            <person name="Yada T."/>
            <person name="Nakamura Y."/>
            <person name="Ohara O."/>
            <person name="Isogai T."/>
            <person name="Sugano S."/>
        </authorList>
    </citation>
    <scope>NUCLEOTIDE SEQUENCE [LARGE SCALE MRNA] (ISOFORM 2)</scope>
</reference>
<reference key="4">
    <citation type="submission" date="2004-06" db="EMBL/GenBank/DDBJ databases">
        <title>Cloning of human full open reading frames in Gateway(TM) system entry vector (pDONR201).</title>
        <authorList>
            <person name="Ebert L."/>
            <person name="Schick M."/>
            <person name="Neubert P."/>
            <person name="Schatten R."/>
            <person name="Henze S."/>
            <person name="Korn B."/>
        </authorList>
    </citation>
    <scope>NUCLEOTIDE SEQUENCE [LARGE SCALE MRNA] (ISOFORM 1)</scope>
</reference>
<reference key="5">
    <citation type="journal article" date="2001" name="Nature">
        <title>The DNA sequence and comparative analysis of human chromosome 20.</title>
        <authorList>
            <person name="Deloukas P."/>
            <person name="Matthews L.H."/>
            <person name="Ashurst J.L."/>
            <person name="Burton J."/>
            <person name="Gilbert J.G.R."/>
            <person name="Jones M."/>
            <person name="Stavrides G."/>
            <person name="Almeida J.P."/>
            <person name="Babbage A.K."/>
            <person name="Bagguley C.L."/>
            <person name="Bailey J."/>
            <person name="Barlow K.F."/>
            <person name="Bates K.N."/>
            <person name="Beard L.M."/>
            <person name="Beare D.M."/>
            <person name="Beasley O.P."/>
            <person name="Bird C.P."/>
            <person name="Blakey S.E."/>
            <person name="Bridgeman A.M."/>
            <person name="Brown A.J."/>
            <person name="Buck D."/>
            <person name="Burrill W.D."/>
            <person name="Butler A.P."/>
            <person name="Carder C."/>
            <person name="Carter N.P."/>
            <person name="Chapman J.C."/>
            <person name="Clamp M."/>
            <person name="Clark G."/>
            <person name="Clark L.N."/>
            <person name="Clark S.Y."/>
            <person name="Clee C.M."/>
            <person name="Clegg S."/>
            <person name="Cobley V.E."/>
            <person name="Collier R.E."/>
            <person name="Connor R.E."/>
            <person name="Corby N.R."/>
            <person name="Coulson A."/>
            <person name="Coville G.J."/>
            <person name="Deadman R."/>
            <person name="Dhami P.D."/>
            <person name="Dunn M."/>
            <person name="Ellington A.G."/>
            <person name="Frankland J.A."/>
            <person name="Fraser A."/>
            <person name="French L."/>
            <person name="Garner P."/>
            <person name="Grafham D.V."/>
            <person name="Griffiths C."/>
            <person name="Griffiths M.N.D."/>
            <person name="Gwilliam R."/>
            <person name="Hall R.E."/>
            <person name="Hammond S."/>
            <person name="Harley J.L."/>
            <person name="Heath P.D."/>
            <person name="Ho S."/>
            <person name="Holden J.L."/>
            <person name="Howden P.J."/>
            <person name="Huckle E."/>
            <person name="Hunt A.R."/>
            <person name="Hunt S.E."/>
            <person name="Jekosch K."/>
            <person name="Johnson C.M."/>
            <person name="Johnson D."/>
            <person name="Kay M.P."/>
            <person name="Kimberley A.M."/>
            <person name="King A."/>
            <person name="Knights A."/>
            <person name="Laird G.K."/>
            <person name="Lawlor S."/>
            <person name="Lehvaeslaiho M.H."/>
            <person name="Leversha M.A."/>
            <person name="Lloyd C."/>
            <person name="Lloyd D.M."/>
            <person name="Lovell J.D."/>
            <person name="Marsh V.L."/>
            <person name="Martin S.L."/>
            <person name="McConnachie L.J."/>
            <person name="McLay K."/>
            <person name="McMurray A.A."/>
            <person name="Milne S.A."/>
            <person name="Mistry D."/>
            <person name="Moore M.J.F."/>
            <person name="Mullikin J.C."/>
            <person name="Nickerson T."/>
            <person name="Oliver K."/>
            <person name="Parker A."/>
            <person name="Patel R."/>
            <person name="Pearce T.A.V."/>
            <person name="Peck A.I."/>
            <person name="Phillimore B.J.C.T."/>
            <person name="Prathalingam S.R."/>
            <person name="Plumb R.W."/>
            <person name="Ramsay H."/>
            <person name="Rice C.M."/>
            <person name="Ross M.T."/>
            <person name="Scott C.E."/>
            <person name="Sehra H.K."/>
            <person name="Shownkeen R."/>
            <person name="Sims S."/>
            <person name="Skuce C.D."/>
            <person name="Smith M.L."/>
            <person name="Soderlund C."/>
            <person name="Steward C.A."/>
            <person name="Sulston J.E."/>
            <person name="Swann R.M."/>
            <person name="Sycamore N."/>
            <person name="Taylor R."/>
            <person name="Tee L."/>
            <person name="Thomas D.W."/>
            <person name="Thorpe A."/>
            <person name="Tracey A."/>
            <person name="Tromans A.C."/>
            <person name="Vaudin M."/>
            <person name="Wall M."/>
            <person name="Wallis J.M."/>
            <person name="Whitehead S.L."/>
            <person name="Whittaker P."/>
            <person name="Willey D.L."/>
            <person name="Williams L."/>
            <person name="Williams S.A."/>
            <person name="Wilming L."/>
            <person name="Wray P.W."/>
            <person name="Hubbard T."/>
            <person name="Durbin R.M."/>
            <person name="Bentley D.R."/>
            <person name="Beck S."/>
            <person name="Rogers J."/>
        </authorList>
    </citation>
    <scope>NUCLEOTIDE SEQUENCE [LARGE SCALE GENOMIC DNA]</scope>
</reference>
<reference key="6">
    <citation type="submission" date="2005-09" db="EMBL/GenBank/DDBJ databases">
        <authorList>
            <person name="Mural R.J."/>
            <person name="Istrail S."/>
            <person name="Sutton G."/>
            <person name="Florea L."/>
            <person name="Halpern A.L."/>
            <person name="Mobarry C.M."/>
            <person name="Lippert R."/>
            <person name="Walenz B."/>
            <person name="Shatkay H."/>
            <person name="Dew I."/>
            <person name="Miller J.R."/>
            <person name="Flanigan M.J."/>
            <person name="Edwards N.J."/>
            <person name="Bolanos R."/>
            <person name="Fasulo D."/>
            <person name="Halldorsson B.V."/>
            <person name="Hannenhalli S."/>
            <person name="Turner R."/>
            <person name="Yooseph S."/>
            <person name="Lu F."/>
            <person name="Nusskern D.R."/>
            <person name="Shue B.C."/>
            <person name="Zheng X.H."/>
            <person name="Zhong F."/>
            <person name="Delcher A.L."/>
            <person name="Huson D.H."/>
            <person name="Kravitz S.A."/>
            <person name="Mouchard L."/>
            <person name="Reinert K."/>
            <person name="Remington K.A."/>
            <person name="Clark A.G."/>
            <person name="Waterman M.S."/>
            <person name="Eichler E.E."/>
            <person name="Adams M.D."/>
            <person name="Hunkapiller M.W."/>
            <person name="Myers E.W."/>
            <person name="Venter J.C."/>
        </authorList>
    </citation>
    <scope>NUCLEOTIDE SEQUENCE [LARGE SCALE GENOMIC DNA]</scope>
</reference>
<reference key="7">
    <citation type="journal article" date="2004" name="Genome Res.">
        <title>The status, quality, and expansion of the NIH full-length cDNA project: the Mammalian Gene Collection (MGC).</title>
        <authorList>
            <consortium name="The MGC Project Team"/>
        </authorList>
    </citation>
    <scope>NUCLEOTIDE SEQUENCE [LARGE SCALE MRNA] (ISOFORM 1)</scope>
    <source>
        <tissue>Muscle</tissue>
        <tissue>Pancreas</tissue>
        <tissue>Placenta</tissue>
    </source>
</reference>
<reference key="8">
    <citation type="journal article" date="2003" name="Nat. Biotechnol.">
        <title>Exploring proteomes and analyzing protein processing by mass spectrometric identification of sorted N-terminal peptides.</title>
        <authorList>
            <person name="Gevaert K."/>
            <person name="Goethals M."/>
            <person name="Martens L."/>
            <person name="Van Damme J."/>
            <person name="Staes A."/>
            <person name="Thomas G.R."/>
            <person name="Vandekerckhove J."/>
        </authorList>
    </citation>
    <scope>PROTEIN SEQUENCE OF 23-36</scope>
    <source>
        <tissue>Platelet</tissue>
    </source>
</reference>
<reference key="9">
    <citation type="journal article" date="2009" name="J. Proteome Res.">
        <title>Glycoproteomics analysis of human liver tissue by combination of multiple enzyme digestion and hydrazide chemistry.</title>
        <authorList>
            <person name="Chen R."/>
            <person name="Jiang X."/>
            <person name="Sun D."/>
            <person name="Han G."/>
            <person name="Wang F."/>
            <person name="Ye M."/>
            <person name="Wang L."/>
            <person name="Zou H."/>
        </authorList>
    </citation>
    <scope>GLYCOSYLATION [LARGE SCALE ANALYSIS] AT ASN-106</scope>
    <source>
        <tissue>Liver</tissue>
    </source>
</reference>
<reference key="10">
    <citation type="journal article" date="2011" name="BMC Syst. Biol.">
        <title>Initial characterization of the human central proteome.</title>
        <authorList>
            <person name="Burkard T.R."/>
            <person name="Planyavsky M."/>
            <person name="Kaupe I."/>
            <person name="Breitwieser F.P."/>
            <person name="Buerckstuemmer T."/>
            <person name="Bennett K.L."/>
            <person name="Superti-Furga G."/>
            <person name="Colinge J."/>
        </authorList>
    </citation>
    <scope>IDENTIFICATION BY MASS SPECTROMETRY [LARGE SCALE ANALYSIS]</scope>
</reference>
<reference key="11">
    <citation type="journal article" date="2014" name="J. Cell Biol.">
        <title>Oxidoreductase activity is necessary for N-glycosylation of cysteine-proximal acceptor sites in glycoproteins.</title>
        <authorList>
            <person name="Cherepanova N.A."/>
            <person name="Shrimal S."/>
            <person name="Gilmore R."/>
        </authorList>
    </citation>
    <scope>IDENTIFICATION IN THE OLIGOSACCHARYLTRANSFERASE COMPLEX</scope>
</reference>
<reference key="12">
    <citation type="journal article" date="2013" name="J. Cell Sci.">
        <title>OST4 is a subunit of the mammalian oligosaccharyltransferase required for efficient N-glycosylation.</title>
        <authorList>
            <person name="Dumax-Vorzet A."/>
            <person name="Roboti P."/>
            <person name="High S."/>
        </authorList>
    </citation>
    <scope>IDENTIFICATION IN THE OLIGOSACCHARYLTRANSFERASE COMPLEX</scope>
</reference>
<reference key="13">
    <citation type="journal article" date="2014" name="J. Proteomics">
        <title>An enzyme assisted RP-RPLC approach for in-depth analysis of human liver phosphoproteome.</title>
        <authorList>
            <person name="Bian Y."/>
            <person name="Song C."/>
            <person name="Cheng K."/>
            <person name="Dong M."/>
            <person name="Wang F."/>
            <person name="Huang J."/>
            <person name="Sun D."/>
            <person name="Wang L."/>
            <person name="Ye M."/>
            <person name="Zou H."/>
        </authorList>
    </citation>
    <scope>IDENTIFICATION BY MASS SPECTROMETRY [LARGE SCALE ANALYSIS]</scope>
    <source>
        <tissue>Liver</tissue>
    </source>
</reference>
<reference key="14">
    <citation type="journal article" date="2015" name="Proteomics">
        <title>N-terminome analysis of the human mitochondrial proteome.</title>
        <authorList>
            <person name="Vaca Jacome A.S."/>
            <person name="Rabilloud T."/>
            <person name="Schaeffer-Reiss C."/>
            <person name="Rompais M."/>
            <person name="Ayoub D."/>
            <person name="Lane L."/>
            <person name="Bairoch A."/>
            <person name="Van Dorsselaer A."/>
            <person name="Carapito C."/>
        </authorList>
    </citation>
    <scope>IDENTIFICATION BY MASS SPECTROMETRY [LARGE SCALE ANALYSIS]</scope>
</reference>
<reference key="15">
    <citation type="journal article" date="2018" name="Mol. Cell">
        <title>Removal of RTF2 from Stalled Replisomes Promotes Maintenance of Genome Integrity.</title>
        <authorList>
            <person name="Kottemann M.C."/>
            <person name="Conti B.A."/>
            <person name="Lach F.P."/>
            <person name="Smogorzewska A."/>
        </authorList>
    </citation>
    <scope>INTERACTION WITH DDI2</scope>
</reference>
<reference evidence="15 16" key="16">
    <citation type="journal article" date="2019" name="Science">
        <title>Cryo-electron microscopy structures of human oligosaccharyltransferase complexes OST-A and OST-B.</title>
        <authorList>
            <person name="Ramirez A.S."/>
            <person name="Kowal J."/>
            <person name="Locher K.P."/>
        </authorList>
    </citation>
    <scope>STRUCTURE BY ELECTRON MICROSCOPY (3.50 ANGSTROMS)</scope>
    <scope>IDENTIFICATION OF THE OLIGOSACCHARYLTRANSFERASE (OST) COMPLEX</scope>
    <scope>FUNCTION</scope>
    <scope>PATHWAY</scope>
</reference>
<reference evidence="17" key="17">
    <citation type="journal article" date="2023" name="Nature">
        <title>Visualization of translation and protein biogenesis at the ER membrane.</title>
        <authorList>
            <person name="Gemmer M."/>
            <person name="Chaillet M.L."/>
            <person name="van Loenhout J."/>
            <person name="Cuevas Arenas R."/>
            <person name="Vismpas D."/>
            <person name="Grollers-Mulderij M."/>
            <person name="Koh F.A."/>
            <person name="Albanese P."/>
            <person name="Scheltema R.A."/>
            <person name="Howes S.C."/>
            <person name="Kotecha A."/>
            <person name="Fedry J."/>
            <person name="Forster F."/>
        </authorList>
    </citation>
    <scope>STRUCTURE BY ELECTRON MICROSCOPY (7.60 ANGSTROMS) OF THE STT3A-CONTAINING OLIGOSACCHARYLTRANSFERASE (OST) AND TRANSLOCON COMPLEXES</scope>
    <scope>SUBUNIT</scope>
</reference>
<reference evidence="18" key="18">
    <citation type="journal article" date="2024" name="Cell">
        <title>Positive selection CRISPR screens reveal a druggable pocket in an oligosaccharyltransferase required for inflammatory signaling to NF-kappaB.</title>
        <authorList>
            <person name="Lampson B.L."/>
            <person name="Ramrez A.S."/>
            <person name="Baro M."/>
            <person name="He L."/>
            <person name="Hegde M."/>
            <person name="Koduri V."/>
            <person name="Pfaff J.L."/>
            <person name="Hanna R.E."/>
            <person name="Kowal J."/>
            <person name="Shirole N.H."/>
            <person name="He Y."/>
            <person name="Doench J.G."/>
            <person name="Contessa J.N."/>
            <person name="Locher K.P."/>
            <person name="Kaelin W.G."/>
        </authorList>
    </citation>
    <scope>STRUCTURE BY ELECTRON MICROSCOPY (3.61 ANGSTROMS) OF THE STT3A-CONTAINING OLIGOSACCHARYLTRANSFERASE (OST)</scope>
    <scope>SUBUNIT</scope>
</reference>
<gene>
    <name evidence="14" type="primary">RPN2</name>
</gene>
<keyword id="KW-0002">3D-structure</keyword>
<keyword id="KW-0025">Alternative splicing</keyword>
<keyword id="KW-0903">Direct protein sequencing</keyword>
<keyword id="KW-0256">Endoplasmic reticulum</keyword>
<keyword id="KW-0325">Glycoprotein</keyword>
<keyword id="KW-1017">Isopeptide bond</keyword>
<keyword id="KW-0472">Membrane</keyword>
<keyword id="KW-1267">Proteomics identification</keyword>
<keyword id="KW-1185">Reference proteome</keyword>
<keyword id="KW-0732">Signal</keyword>
<keyword id="KW-0812">Transmembrane</keyword>
<keyword id="KW-1133">Transmembrane helix</keyword>
<keyword id="KW-0832">Ubl conjugation</keyword>
<dbReference type="EMBL" id="Y00282">
    <property type="protein sequence ID" value="CAA68393.1"/>
    <property type="molecule type" value="mRNA"/>
</dbReference>
<dbReference type="EMBL" id="AJ237734">
    <property type="protein sequence ID" value="CAB54801.1"/>
    <property type="molecule type" value="Genomic_DNA"/>
</dbReference>
<dbReference type="EMBL" id="AJ237735">
    <property type="protein sequence ID" value="CAB54801.1"/>
    <property type="status" value="JOINED"/>
    <property type="molecule type" value="Genomic_DNA"/>
</dbReference>
<dbReference type="EMBL" id="AJ237733">
    <property type="protein sequence ID" value="CAB54801.1"/>
    <property type="status" value="JOINED"/>
    <property type="molecule type" value="Genomic_DNA"/>
</dbReference>
<dbReference type="EMBL" id="AJ237736">
    <property type="protein sequence ID" value="CAB54801.1"/>
    <property type="status" value="JOINED"/>
    <property type="molecule type" value="Genomic_DNA"/>
</dbReference>
<dbReference type="EMBL" id="AJ237737">
    <property type="protein sequence ID" value="CAB54801.1"/>
    <property type="status" value="JOINED"/>
    <property type="molecule type" value="Genomic_DNA"/>
</dbReference>
<dbReference type="EMBL" id="AJ237738">
    <property type="protein sequence ID" value="CAB54801.1"/>
    <property type="status" value="JOINED"/>
    <property type="molecule type" value="Genomic_DNA"/>
</dbReference>
<dbReference type="EMBL" id="AJ237739">
    <property type="protein sequence ID" value="CAB54801.1"/>
    <property type="status" value="JOINED"/>
    <property type="molecule type" value="Genomic_DNA"/>
</dbReference>
<dbReference type="EMBL" id="AJ237740">
    <property type="protein sequence ID" value="CAB54801.1"/>
    <property type="status" value="JOINED"/>
    <property type="molecule type" value="Genomic_DNA"/>
</dbReference>
<dbReference type="EMBL" id="AJ237741">
    <property type="protein sequence ID" value="CAB54801.1"/>
    <property type="status" value="JOINED"/>
    <property type="molecule type" value="Genomic_DNA"/>
</dbReference>
<dbReference type="EMBL" id="AJ237742">
    <property type="protein sequence ID" value="CAB54801.1"/>
    <property type="status" value="JOINED"/>
    <property type="molecule type" value="Genomic_DNA"/>
</dbReference>
<dbReference type="EMBL" id="AJ237743">
    <property type="protein sequence ID" value="CAB54801.1"/>
    <property type="status" value="JOINED"/>
    <property type="molecule type" value="Genomic_DNA"/>
</dbReference>
<dbReference type="EMBL" id="AJ237744">
    <property type="protein sequence ID" value="CAB54801.1"/>
    <property type="status" value="JOINED"/>
    <property type="molecule type" value="Genomic_DNA"/>
</dbReference>
<dbReference type="EMBL" id="AJ237745">
    <property type="protein sequence ID" value="CAB54801.1"/>
    <property type="status" value="JOINED"/>
    <property type="molecule type" value="Genomic_DNA"/>
</dbReference>
<dbReference type="EMBL" id="AJ237746">
    <property type="protein sequence ID" value="CAB54801.1"/>
    <property type="status" value="JOINED"/>
    <property type="molecule type" value="Genomic_DNA"/>
</dbReference>
<dbReference type="EMBL" id="AJ237747">
    <property type="protein sequence ID" value="CAB54801.1"/>
    <property type="status" value="JOINED"/>
    <property type="molecule type" value="Genomic_DNA"/>
</dbReference>
<dbReference type="EMBL" id="AJ237748">
    <property type="protein sequence ID" value="CAB54801.1"/>
    <property type="status" value="JOINED"/>
    <property type="molecule type" value="Genomic_DNA"/>
</dbReference>
<dbReference type="EMBL" id="AJ237749">
    <property type="protein sequence ID" value="CAB54801.1"/>
    <property type="status" value="JOINED"/>
    <property type="molecule type" value="Genomic_DNA"/>
</dbReference>
<dbReference type="EMBL" id="AK096243">
    <property type="protein sequence ID" value="BAG53237.1"/>
    <property type="molecule type" value="mRNA"/>
</dbReference>
<dbReference type="EMBL" id="CR456899">
    <property type="protein sequence ID" value="CAG33180.1"/>
    <property type="molecule type" value="mRNA"/>
</dbReference>
<dbReference type="EMBL" id="AL031659">
    <property type="status" value="NOT_ANNOTATED_CDS"/>
    <property type="molecule type" value="Genomic_DNA"/>
</dbReference>
<dbReference type="EMBL" id="CH471077">
    <property type="protein sequence ID" value="EAW76073.1"/>
    <property type="molecule type" value="Genomic_DNA"/>
</dbReference>
<dbReference type="EMBL" id="BC002380">
    <property type="protein sequence ID" value="AAH02380.2"/>
    <property type="molecule type" value="mRNA"/>
</dbReference>
<dbReference type="EMBL" id="BC003560">
    <property type="protein sequence ID" value="AAH03560.1"/>
    <property type="molecule type" value="mRNA"/>
</dbReference>
<dbReference type="EMBL" id="BC013028">
    <property type="protein sequence ID" value="AAH13028.2"/>
    <property type="molecule type" value="mRNA"/>
</dbReference>
<dbReference type="EMBL" id="BC020222">
    <property type="protein sequence ID" value="AAH20222.1"/>
    <property type="molecule type" value="mRNA"/>
</dbReference>
<dbReference type="CCDS" id="CCDS13291.1">
    <molecule id="P04844-1"/>
</dbReference>
<dbReference type="CCDS" id="CCDS46599.1">
    <molecule id="P04844-2"/>
</dbReference>
<dbReference type="PIR" id="B26168">
    <property type="entry name" value="B26168"/>
</dbReference>
<dbReference type="RefSeq" id="NP_001129243.1">
    <molecule id="P04844-2"/>
    <property type="nucleotide sequence ID" value="NM_001135771.3"/>
</dbReference>
<dbReference type="RefSeq" id="NP_001311228.1">
    <property type="nucleotide sequence ID" value="NM_001324299.1"/>
</dbReference>
<dbReference type="RefSeq" id="NP_001311230.1">
    <property type="nucleotide sequence ID" value="NM_001324301.1"/>
</dbReference>
<dbReference type="RefSeq" id="NP_001311231.1">
    <property type="nucleotide sequence ID" value="NM_001324302.1"/>
</dbReference>
<dbReference type="RefSeq" id="NP_001311232.1">
    <property type="nucleotide sequence ID" value="NM_001324303.1"/>
</dbReference>
<dbReference type="RefSeq" id="NP_001311233.1">
    <property type="nucleotide sequence ID" value="NM_001324304.1"/>
</dbReference>
<dbReference type="RefSeq" id="NP_001311234.1">
    <property type="nucleotide sequence ID" value="NM_001324305.1"/>
</dbReference>
<dbReference type="RefSeq" id="NP_001311235.1">
    <property type="nucleotide sequence ID" value="NM_001324306.1"/>
</dbReference>
<dbReference type="RefSeq" id="NP_002942.2">
    <molecule id="P04844-1"/>
    <property type="nucleotide sequence ID" value="NM_002951.4"/>
</dbReference>
<dbReference type="PDB" id="6S7O">
    <property type="method" value="EM"/>
    <property type="resolution" value="3.50 A"/>
    <property type="chains" value="F=1-631"/>
</dbReference>
<dbReference type="PDB" id="6S7T">
    <property type="method" value="EM"/>
    <property type="resolution" value="3.50 A"/>
    <property type="chains" value="F=1-631"/>
</dbReference>
<dbReference type="PDB" id="8B6L">
    <property type="method" value="EM"/>
    <property type="resolution" value="7.60 A"/>
    <property type="chains" value="P=1-631"/>
</dbReference>
<dbReference type="PDB" id="8PN9">
    <property type="method" value="EM"/>
    <property type="resolution" value="3.61 A"/>
    <property type="chains" value="F=1-631"/>
</dbReference>
<dbReference type="PDBsum" id="6S7O"/>
<dbReference type="PDBsum" id="6S7T"/>
<dbReference type="PDBsum" id="8B6L"/>
<dbReference type="PDBsum" id="8PN9"/>
<dbReference type="EMDB" id="EMD-10110"/>
<dbReference type="EMDB" id="EMD-10112"/>
<dbReference type="EMDB" id="EMD-15870"/>
<dbReference type="EMDB" id="EMD-17779"/>
<dbReference type="SMR" id="P04844"/>
<dbReference type="BioGRID" id="112100">
    <property type="interactions" value="823"/>
</dbReference>
<dbReference type="ComplexPortal" id="CPX-5621">
    <property type="entry name" value="Oligosaccharyltransferase complex A"/>
</dbReference>
<dbReference type="ComplexPortal" id="CPX-5622">
    <property type="entry name" value="Oligosaccharyltransferase complex B, MAGT1 variant"/>
</dbReference>
<dbReference type="ComplexPortal" id="CPX-8738">
    <property type="entry name" value="Oligosaccharyltransferase complex B, TUCS3 variant"/>
</dbReference>
<dbReference type="CORUM" id="P04844"/>
<dbReference type="FunCoup" id="P04844">
    <property type="interactions" value="3020"/>
</dbReference>
<dbReference type="IntAct" id="P04844">
    <property type="interactions" value="189"/>
</dbReference>
<dbReference type="MINT" id="P04844"/>
<dbReference type="STRING" id="9606.ENSP00000237530"/>
<dbReference type="TCDB" id="9.B.142.3.17">
    <property type="family name" value="the integral membrane glycosyltransferase family 39 (gt39) family"/>
</dbReference>
<dbReference type="GlyConnect" id="1187">
    <property type="glycosylation" value="16 N-Linked glycans (1 site)"/>
</dbReference>
<dbReference type="GlyCosmos" id="P04844">
    <property type="glycosylation" value="2 sites, 17 glycans"/>
</dbReference>
<dbReference type="GlyGen" id="P04844">
    <property type="glycosylation" value="7 sites, 17 N-linked glycans (1 site), 2 O-linked glycans (6 sites)"/>
</dbReference>
<dbReference type="iPTMnet" id="P04844"/>
<dbReference type="MetOSite" id="P04844"/>
<dbReference type="PhosphoSitePlus" id="P04844"/>
<dbReference type="SwissPalm" id="P04844"/>
<dbReference type="BioMuta" id="RPN2"/>
<dbReference type="DMDM" id="9297108"/>
<dbReference type="jPOST" id="P04844"/>
<dbReference type="MassIVE" id="P04844"/>
<dbReference type="PaxDb" id="9606-ENSP00000237530"/>
<dbReference type="PeptideAtlas" id="P04844"/>
<dbReference type="PRIDE" id="P04844"/>
<dbReference type="ProteomicsDB" id="51750">
    <molecule id="P04844-1"/>
</dbReference>
<dbReference type="ProteomicsDB" id="51751">
    <molecule id="P04844-2"/>
</dbReference>
<dbReference type="Pumba" id="P04844"/>
<dbReference type="TopDownProteomics" id="P04844-1">
    <molecule id="P04844-1"/>
</dbReference>
<dbReference type="Antibodypedia" id="1855">
    <property type="antibodies" value="198 antibodies from 27 providers"/>
</dbReference>
<dbReference type="DNASU" id="6185"/>
<dbReference type="Ensembl" id="ENST00000237530.11">
    <molecule id="P04844-1"/>
    <property type="protein sequence ID" value="ENSP00000237530.6"/>
    <property type="gene ID" value="ENSG00000118705.18"/>
</dbReference>
<dbReference type="Ensembl" id="ENST00000373622.9">
    <molecule id="P04844-2"/>
    <property type="protein sequence ID" value="ENSP00000362724.5"/>
    <property type="gene ID" value="ENSG00000118705.18"/>
</dbReference>
<dbReference type="Ensembl" id="ENST00000709409.1">
    <molecule id="P04844-2"/>
    <property type="protein sequence ID" value="ENSP00000517677.1"/>
    <property type="gene ID" value="ENSG00000291973.1"/>
</dbReference>
<dbReference type="Ensembl" id="ENST00000709412.1">
    <molecule id="P04844-1"/>
    <property type="protein sequence ID" value="ENSP00000517679.1"/>
    <property type="gene ID" value="ENSG00000291973.1"/>
</dbReference>
<dbReference type="GeneID" id="6185"/>
<dbReference type="KEGG" id="hsa:6185"/>
<dbReference type="MANE-Select" id="ENST00000237530.11">
    <property type="protein sequence ID" value="ENSP00000237530.6"/>
    <property type="RefSeq nucleotide sequence ID" value="NM_002951.5"/>
    <property type="RefSeq protein sequence ID" value="NP_002942.2"/>
</dbReference>
<dbReference type="UCSC" id="uc002xgp.4">
    <molecule id="P04844-1"/>
    <property type="organism name" value="human"/>
</dbReference>
<dbReference type="AGR" id="HGNC:10382"/>
<dbReference type="CTD" id="6185"/>
<dbReference type="DisGeNET" id="6185"/>
<dbReference type="GeneCards" id="RPN2"/>
<dbReference type="HGNC" id="HGNC:10382">
    <property type="gene designation" value="RPN2"/>
</dbReference>
<dbReference type="HPA" id="ENSG00000118705">
    <property type="expression patterns" value="Low tissue specificity"/>
</dbReference>
<dbReference type="MalaCards" id="RPN2"/>
<dbReference type="MIM" id="180490">
    <property type="type" value="gene"/>
</dbReference>
<dbReference type="neXtProt" id="NX_P04844"/>
<dbReference type="OpenTargets" id="ENSG00000118705"/>
<dbReference type="PharmGKB" id="PA34778"/>
<dbReference type="VEuPathDB" id="HostDB:ENSG00000118705"/>
<dbReference type="eggNOG" id="KOG2447">
    <property type="taxonomic scope" value="Eukaryota"/>
</dbReference>
<dbReference type="GeneTree" id="ENSGT00390000002635"/>
<dbReference type="HOGENOM" id="CLU_017104_0_0_1"/>
<dbReference type="InParanoid" id="P04844"/>
<dbReference type="OMA" id="QEHETIY"/>
<dbReference type="OrthoDB" id="432292at2759"/>
<dbReference type="PAN-GO" id="P04844">
    <property type="GO annotations" value="2 GO annotations based on evolutionary models"/>
</dbReference>
<dbReference type="PhylomeDB" id="P04844"/>
<dbReference type="TreeFam" id="TF106146"/>
<dbReference type="BRENDA" id="2.4.99.18">
    <property type="organism ID" value="2681"/>
</dbReference>
<dbReference type="PathwayCommons" id="P04844"/>
<dbReference type="Reactome" id="R-HSA-1799339">
    <property type="pathway name" value="SRP-dependent cotranslational protein targeting to membrane"/>
</dbReference>
<dbReference type="Reactome" id="R-HSA-446203">
    <property type="pathway name" value="Asparagine N-linked glycosylation"/>
</dbReference>
<dbReference type="Reactome" id="R-HSA-9694548">
    <property type="pathway name" value="Maturation of spike protein"/>
</dbReference>
<dbReference type="SignaLink" id="P04844"/>
<dbReference type="SIGNOR" id="P04844"/>
<dbReference type="UniPathway" id="UPA00378"/>
<dbReference type="BioGRID-ORCS" id="6185">
    <property type="hits" value="642 hits in 1169 CRISPR screens"/>
</dbReference>
<dbReference type="CD-CODE" id="91857CE7">
    <property type="entry name" value="Nucleolus"/>
</dbReference>
<dbReference type="CD-CODE" id="FB4E32DD">
    <property type="entry name" value="Presynaptic clusters and postsynaptic densities"/>
</dbReference>
<dbReference type="ChiTaRS" id="RPN2">
    <property type="organism name" value="human"/>
</dbReference>
<dbReference type="GeneWiki" id="RPN2"/>
<dbReference type="GenomeRNAi" id="6185"/>
<dbReference type="Pharos" id="P04844">
    <property type="development level" value="Tbio"/>
</dbReference>
<dbReference type="PRO" id="PR:P04844"/>
<dbReference type="Proteomes" id="UP000005640">
    <property type="component" value="Chromosome 20"/>
</dbReference>
<dbReference type="RNAct" id="P04844">
    <property type="molecule type" value="protein"/>
</dbReference>
<dbReference type="Bgee" id="ENSG00000118705">
    <property type="expression patterns" value="Expressed in corpus epididymis and 222 other cell types or tissues"/>
</dbReference>
<dbReference type="ExpressionAtlas" id="P04844">
    <property type="expression patterns" value="baseline and differential"/>
</dbReference>
<dbReference type="GO" id="GO:0005783">
    <property type="term" value="C:endoplasmic reticulum"/>
    <property type="evidence" value="ECO:0000314"/>
    <property type="project" value="HPA"/>
</dbReference>
<dbReference type="GO" id="GO:0005789">
    <property type="term" value="C:endoplasmic reticulum membrane"/>
    <property type="evidence" value="ECO:0000304"/>
    <property type="project" value="Reactome"/>
</dbReference>
<dbReference type="GO" id="GO:0016020">
    <property type="term" value="C:membrane"/>
    <property type="evidence" value="ECO:0007005"/>
    <property type="project" value="UniProtKB"/>
</dbReference>
<dbReference type="GO" id="GO:0016604">
    <property type="term" value="C:nuclear body"/>
    <property type="evidence" value="ECO:0000314"/>
    <property type="project" value="HPA"/>
</dbReference>
<dbReference type="GO" id="GO:0008250">
    <property type="term" value="C:oligosaccharyltransferase complex"/>
    <property type="evidence" value="ECO:0000314"/>
    <property type="project" value="UniProtKB"/>
</dbReference>
<dbReference type="GO" id="GO:0160226">
    <property type="term" value="C:oligosaccharyltransferase complex A"/>
    <property type="evidence" value="ECO:0000314"/>
    <property type="project" value="UniProtKB"/>
</dbReference>
<dbReference type="GO" id="GO:0160227">
    <property type="term" value="C:oligosaccharyltransferase complex B"/>
    <property type="evidence" value="ECO:0000314"/>
    <property type="project" value="UniProtKB"/>
</dbReference>
<dbReference type="GO" id="GO:0036211">
    <property type="term" value="P:protein modification process"/>
    <property type="evidence" value="ECO:0000304"/>
    <property type="project" value="ProtInc"/>
</dbReference>
<dbReference type="GO" id="GO:0006487">
    <property type="term" value="P:protein N-linked glycosylation"/>
    <property type="evidence" value="ECO:0000314"/>
    <property type="project" value="UniProtKB"/>
</dbReference>
<dbReference type="InterPro" id="IPR055375">
    <property type="entry name" value="Ribophorin_II_2nd"/>
</dbReference>
<dbReference type="InterPro" id="IPR055374">
    <property type="entry name" value="Ribophorin_II_3rd"/>
</dbReference>
<dbReference type="InterPro" id="IPR056790">
    <property type="entry name" value="Ribophorin_II_C"/>
</dbReference>
<dbReference type="InterPro" id="IPR055373">
    <property type="entry name" value="Ribophorin_II_N"/>
</dbReference>
<dbReference type="InterPro" id="IPR008814">
    <property type="entry name" value="Swp1"/>
</dbReference>
<dbReference type="PANTHER" id="PTHR12640:SF0">
    <property type="entry name" value="DOLICHYL-DIPHOSPHOOLIGOSACCHARIDE--PROTEIN GLYCOSYLTRANSFERASE SUBUNIT 2"/>
    <property type="match status" value="1"/>
</dbReference>
<dbReference type="PANTHER" id="PTHR12640">
    <property type="entry name" value="RIBOPHORIN II"/>
    <property type="match status" value="1"/>
</dbReference>
<dbReference type="Pfam" id="PF05817">
    <property type="entry name" value="Ribophorin_II"/>
    <property type="match status" value="1"/>
</dbReference>
<dbReference type="Pfam" id="PF23861">
    <property type="entry name" value="Ribophorin_II_2nd"/>
    <property type="match status" value="1"/>
</dbReference>
<dbReference type="Pfam" id="PF23860">
    <property type="entry name" value="Ribophorin_II_3rd"/>
    <property type="match status" value="1"/>
</dbReference>
<dbReference type="Pfam" id="PF25147">
    <property type="entry name" value="Ribophorin_II_C"/>
    <property type="match status" value="1"/>
</dbReference>
<feature type="signal peptide" evidence="4">
    <location>
        <begin position="1"/>
        <end position="22"/>
    </location>
</feature>
<feature type="chain" id="PRO_0000022244" description="Dolichyl-diphosphooligosaccharide--protein glycosyltransferase subunit 2">
    <location>
        <begin position="23"/>
        <end position="631"/>
    </location>
</feature>
<feature type="topological domain" description="Lumenal" evidence="3">
    <location>
        <begin position="23"/>
        <end position="540"/>
    </location>
</feature>
<feature type="transmembrane region" description="Helical" evidence="3">
    <location>
        <begin position="541"/>
        <end position="561"/>
    </location>
</feature>
<feature type="topological domain" description="Cytoplasmic" evidence="3">
    <location>
        <begin position="562"/>
        <end position="571"/>
    </location>
</feature>
<feature type="transmembrane region" description="Helical" evidence="3">
    <location>
        <begin position="572"/>
        <end position="592"/>
    </location>
</feature>
<feature type="topological domain" description="Lumenal" evidence="3">
    <location>
        <begin position="593"/>
        <end position="596"/>
    </location>
</feature>
<feature type="transmembrane region" description="Helical" evidence="3">
    <location>
        <begin position="597"/>
        <end position="617"/>
    </location>
</feature>
<feature type="topological domain" description="Cytoplasmic" evidence="3">
    <location>
        <begin position="618"/>
        <end position="631"/>
    </location>
</feature>
<feature type="glycosylation site" description="N-linked (GlcNAc...) asparagine" evidence="5">
    <location>
        <position position="106"/>
    </location>
</feature>
<feature type="cross-link" description="Glycyl lysine isopeptide (Lys-Gly) (interchain with G-Cter in ubiquitin)">
    <location>
        <position position="154"/>
    </location>
</feature>
<feature type="splice variant" id="VSP_043051" description="In isoform 2." evidence="12">
    <location>
        <begin position="70"/>
        <end position="101"/>
    </location>
</feature>
<feature type="splice variant" id="VSP_043052" description="In isoform 2." evidence="12">
    <original>K</original>
    <variation>KRIAAEQSSRLAKYRTL</variation>
    <location>
        <position position="627"/>
    </location>
</feature>
<feature type="sequence variant" id="VAR_054040" description="In dbSNP:rs34951322.">
    <original>L</original>
    <variation>F</variation>
    <location>
        <position position="597"/>
    </location>
</feature>
<feature type="sequence conflict" description="In Ref. 1; CAA68393." evidence="13" ref="1">
    <original>V</original>
    <variation>L</variation>
    <location>
        <position position="197"/>
    </location>
</feature>
<feature type="sequence conflict" description="In Ref. 1; CAA68393." evidence="13" ref="1">
    <original>F</original>
    <variation>C</variation>
    <location>
        <position position="201"/>
    </location>
</feature>
<feature type="sequence conflict" description="In Ref. 1; CAA68393." evidence="13" ref="1">
    <original>A</original>
    <variation>S</variation>
    <location>
        <position position="260"/>
    </location>
</feature>
<feature type="sequence conflict" description="In Ref. 4; CAG33180." evidence="13" ref="4">
    <original>A</original>
    <variation>S</variation>
    <location>
        <position position="286"/>
    </location>
</feature>
<feature type="sequence conflict" description="In Ref. 1; CAA68393." evidence="13" ref="1">
    <original>V</original>
    <variation>M</variation>
    <location>
        <position position="423"/>
    </location>
</feature>
<feature type="sequence conflict" description="In Ref. 4; CAG33180." evidence="13" ref="4">
    <original>A</original>
    <variation>V</variation>
    <location>
        <position position="427"/>
    </location>
</feature>
<feature type="sequence conflict" description="In Ref. 7; AAH13028." evidence="13" ref="7">
    <original>T</original>
    <variation>I</variation>
    <location>
        <position position="571"/>
    </location>
</feature>
<feature type="strand" evidence="19">
    <location>
        <begin position="374"/>
        <end position="376"/>
    </location>
</feature>
<feature type="strand" evidence="20">
    <location>
        <begin position="392"/>
        <end position="395"/>
    </location>
</feature>
<feature type="strand" evidence="19">
    <location>
        <begin position="398"/>
        <end position="400"/>
    </location>
</feature>
<feature type="strand" evidence="19">
    <location>
        <begin position="403"/>
        <end position="407"/>
    </location>
</feature>
<feature type="strand" evidence="19">
    <location>
        <begin position="419"/>
        <end position="421"/>
    </location>
</feature>
<feature type="strand" evidence="19">
    <location>
        <begin position="423"/>
        <end position="425"/>
    </location>
</feature>
<feature type="strand" evidence="19">
    <location>
        <begin position="435"/>
        <end position="440"/>
    </location>
</feature>
<feature type="turn" evidence="19">
    <location>
        <begin position="441"/>
        <end position="443"/>
    </location>
</feature>
<feature type="strand" evidence="19">
    <location>
        <begin position="446"/>
        <end position="450"/>
    </location>
</feature>
<feature type="strand" evidence="20">
    <location>
        <begin position="452"/>
        <end position="454"/>
    </location>
</feature>
<feature type="strand" evidence="19">
    <location>
        <begin position="455"/>
        <end position="458"/>
    </location>
</feature>
<feature type="strand" evidence="19">
    <location>
        <begin position="465"/>
        <end position="467"/>
    </location>
</feature>
<feature type="turn" evidence="19">
    <location>
        <begin position="469"/>
        <end position="471"/>
    </location>
</feature>
<feature type="strand" evidence="19">
    <location>
        <begin position="472"/>
        <end position="474"/>
    </location>
</feature>
<feature type="strand" evidence="19">
    <location>
        <begin position="479"/>
        <end position="483"/>
    </location>
</feature>
<feature type="strand" evidence="19">
    <location>
        <begin position="488"/>
        <end position="491"/>
    </location>
</feature>
<feature type="strand" evidence="19">
    <location>
        <begin position="497"/>
        <end position="502"/>
    </location>
</feature>
<feature type="helix" evidence="19">
    <location>
        <begin position="539"/>
        <end position="563"/>
    </location>
</feature>
<feature type="helix" evidence="19">
    <location>
        <begin position="574"/>
        <end position="595"/>
    </location>
</feature>
<feature type="helix" evidence="19">
    <location>
        <begin position="599"/>
        <end position="628"/>
    </location>
</feature>
<sequence length="631" mass="69284">MAPPGSSTVFLLALTIIASTWALTPTHYLTKHDVERLKASLDRPFTNLESAFYSIVGLSSLGAQVPDAKKACTYIRSNLDPSNVDSLFYAAQASQALSGCEISISNETKDLLLAAVSEDSSVTQIYHAVAALSGFGLPLASQEALSALTARLSKEETVLATVQALQTASHLSQQADLRSIVEEIEDLVARLDELGGVYLQFEEGLETTALFVAATYKLMDHVGTEPSIKEDQVIQLMNAIFSKKNFESLSEAFSVASAAAVLSHNRYHVPVVVVPEGSASDTHEQAILRLQVTNVLSQPLTQATVKLEHAKSVASRATVLQKTSFTPVGDVFELNFMNVKFSSGYYDFLVEVEGDNRYIANTVELRVKISTEVGITNVDLSTVDKDQSIAPKTTRVTYPAKAKGTFIADSHQNFALFFQLVDVNTGAELTPHQTFVRLHNQKTGQEVVFVAEPDNKNVYKFELDTSERKIEFDSASGTYTLYLIIGDATLKNPILWNVADVVIKFPEEEAPSTVLSQNLFTPKQEIQHLFREPEKRPPTVVSNTFTALILSPLLLLFALWIRIGANVSNFTFAPSTIIFHLGHAAMLGLMYVYWTQLNMFQTLKYLAILGSVTFLAGNRMLAQQAVKRTAH</sequence>
<name>RPN2_HUMAN</name>
<organism>
    <name type="scientific">Homo sapiens</name>
    <name type="common">Human</name>
    <dbReference type="NCBI Taxonomy" id="9606"/>
    <lineage>
        <taxon>Eukaryota</taxon>
        <taxon>Metazoa</taxon>
        <taxon>Chordata</taxon>
        <taxon>Craniata</taxon>
        <taxon>Vertebrata</taxon>
        <taxon>Euteleostomi</taxon>
        <taxon>Mammalia</taxon>
        <taxon>Eutheria</taxon>
        <taxon>Euarchontoglires</taxon>
        <taxon>Primates</taxon>
        <taxon>Haplorrhini</taxon>
        <taxon>Catarrhini</taxon>
        <taxon>Hominidae</taxon>
        <taxon>Homo</taxon>
    </lineage>
</organism>
<evidence type="ECO:0000250" key="1">
    <source>
        <dbReference type="UniProtKB" id="F1PCT7"/>
    </source>
</evidence>
<evidence type="ECO:0000250" key="2">
    <source>
        <dbReference type="UniProtKB" id="Q9DBG6"/>
    </source>
</evidence>
<evidence type="ECO:0000255" key="3"/>
<evidence type="ECO:0000269" key="4">
    <source>
    </source>
</evidence>
<evidence type="ECO:0000269" key="5">
    <source>
    </source>
</evidence>
<evidence type="ECO:0000269" key="6">
    <source>
    </source>
</evidence>
<evidence type="ECO:0000269" key="7">
    <source>
    </source>
</evidence>
<evidence type="ECO:0000269" key="8">
    <source>
    </source>
</evidence>
<evidence type="ECO:0000269" key="9">
    <source>
    </source>
</evidence>
<evidence type="ECO:0000269" key="10">
    <source>
    </source>
</evidence>
<evidence type="ECO:0000269" key="11">
    <source>
    </source>
</evidence>
<evidence type="ECO:0000303" key="12">
    <source>
    </source>
</evidence>
<evidence type="ECO:0000305" key="13"/>
<evidence type="ECO:0000312" key="14">
    <source>
        <dbReference type="HGNC" id="HGNC:10382"/>
    </source>
</evidence>
<evidence type="ECO:0007744" key="15">
    <source>
        <dbReference type="PDB" id="6S7O"/>
    </source>
</evidence>
<evidence type="ECO:0007744" key="16">
    <source>
        <dbReference type="PDB" id="6S7T"/>
    </source>
</evidence>
<evidence type="ECO:0007744" key="17">
    <source>
        <dbReference type="PDB" id="8B6L"/>
    </source>
</evidence>
<evidence type="ECO:0007744" key="18">
    <source>
        <dbReference type="PDB" id="8PN9"/>
    </source>
</evidence>
<evidence type="ECO:0007829" key="19">
    <source>
        <dbReference type="PDB" id="6S7O"/>
    </source>
</evidence>
<evidence type="ECO:0007829" key="20">
    <source>
        <dbReference type="PDB" id="6S7T"/>
    </source>
</evidence>
<comment type="function">
    <text evidence="1 9">Subunit of the oligosaccharyl transferase (OST) complex that catalyzes the initial transfer of a defined glycan (Glc(3)Man(9)GlcNAc(2) in eukaryotes) from the lipid carrier dolichol-pyrophosphate to an asparagine residue within an Asn-X-Ser/Thr consensus motif in nascent polypeptide chains, the first step in protein N-glycosylation (PubMed:31831667). N-glycosylation occurs cotranslationally and the complex associates with the Sec61 complex at the channel-forming translocon complex that mediates protein translocation across the endoplasmic reticulum (ER). All subunits are required for a maximal enzyme activity.</text>
</comment>
<comment type="pathway">
    <text evidence="9">Protein modification; protein glycosylation.</text>
</comment>
<comment type="subunit">
    <text evidence="1 2 6 7 8 9 10 11">Component of the oligosaccharyltransferase (OST) complex (PubMed:31831667, PubMed:36697828, PubMed:38670073). OST exists in two different complex forms which contain common core subunits RPN1, RPN2, OST48, OST4, DAD1 and TMEM258, either STT3A or STT3B as catalytic subunits, and form-specific accessory subunits (PubMed:23606741, PubMed:25135935, PubMed:31831667, PubMed:36697828, PubMed:38670073). STT3A complex assembly occurs through the formation of 3 subcomplexes. Subcomplex 1 contains RPN1 and TMEM258, subcomplex 2 contains the STT3A-specific subunits STT3A, DC2/OSTC, and KCP2 as well as the core subunit OST4, and subcomplex 3 contains RPN2, DAD1, and OST48. The STT3A complex can form stable complexes with the Sec61 complex or with both the Sec61 and TRAP complexes (By similarity). Interacts with DDI2 (PubMed:29290612). Interacts with TMEM35A/NACHO (By similarity).</text>
</comment>
<comment type="interaction">
    <interactant intactId="EBI-719731">
        <id>P04844</id>
    </interactant>
    <interactant intactId="EBI-11337900">
        <id>Q9H5K3</id>
        <label>POMK</label>
    </interactant>
    <organismsDiffer>false</organismsDiffer>
    <experiments>2</experiments>
</comment>
<comment type="subcellular location">
    <subcellularLocation>
        <location evidence="1">Endoplasmic reticulum</location>
    </subcellularLocation>
    <subcellularLocation>
        <location>Endoplasmic reticulum membrane</location>
        <topology evidence="13">Multi-pass membrane protein</topology>
    </subcellularLocation>
</comment>
<comment type="alternative products">
    <event type="alternative splicing"/>
    <isoform>
        <id>P04844-1</id>
        <name>1</name>
        <sequence type="displayed"/>
    </isoform>
    <isoform>
        <id>P04844-2</id>
        <name>2</name>
        <sequence type="described" ref="VSP_043051 VSP_043052"/>
    </isoform>
</comment>
<comment type="tissue specificity">
    <text>Expressed in all tissues tested.</text>
</comment>
<comment type="similarity">
    <text evidence="13">Belongs to the SWP1 family.</text>
</comment>
<proteinExistence type="evidence at protein level"/>
<accession>P04844</accession>
<accession>Q5JYR6</accession>
<accession>Q6IBA5</accession>
<accession>Q96E21</accession>
<accession>Q9BUQ3</accession>
<accession>Q9UBE1</accession>
<protein>
    <recommendedName>
        <fullName evidence="13">Dolichyl-diphosphooligosaccharide--protein glycosyltransferase subunit 2</fullName>
    </recommendedName>
    <alternativeName>
        <fullName>Dolichyl-diphosphooligosaccharide--protein glycosyltransferase 63 kDa subunit</fullName>
    </alternativeName>
    <alternativeName>
        <fullName>RIBIIR</fullName>
    </alternativeName>
    <alternativeName>
        <fullName>Ribophorin II</fullName>
        <shortName>RPN-II</shortName>
    </alternativeName>
    <alternativeName>
        <fullName>Ribophorin-2</fullName>
    </alternativeName>
</protein>